<protein>
    <recommendedName>
        <fullName evidence="1">Pentafunctional AROM polypeptide</fullName>
    </recommendedName>
    <domain>
        <recommendedName>
            <fullName evidence="1">3-dehydroquinate synthase</fullName>
            <shortName evidence="1">DHQS</shortName>
            <ecNumber evidence="1">4.2.3.4</ecNumber>
        </recommendedName>
    </domain>
    <domain>
        <recommendedName>
            <fullName evidence="1">3-phosphoshikimate 1-carboxyvinyltransferase</fullName>
            <ecNumber evidence="1">2.5.1.19</ecNumber>
        </recommendedName>
        <alternativeName>
            <fullName evidence="1">5-enolpyruvylshikimate-3-phosphate synthase</fullName>
            <shortName evidence="1">EPSP synthase</shortName>
            <shortName evidence="1">EPSPS</shortName>
        </alternativeName>
    </domain>
    <domain>
        <recommendedName>
            <fullName evidence="1">Shikimate kinase</fullName>
            <shortName evidence="1">SK</shortName>
            <ecNumber evidence="1">2.7.1.71</ecNumber>
        </recommendedName>
    </domain>
    <domain>
        <recommendedName>
            <fullName evidence="1">3-dehydroquinate dehydratase</fullName>
            <shortName evidence="1">3-dehydroquinase</shortName>
            <ecNumber evidence="1">4.2.1.10</ecNumber>
        </recommendedName>
    </domain>
    <domain>
        <recommendedName>
            <fullName evidence="1">Shikimate dehydrogenase</fullName>
            <ecNumber evidence="1">1.1.1.25</ecNumber>
        </recommendedName>
    </domain>
</protein>
<gene>
    <name evidence="1" type="primary">ARO1</name>
    <name type="ordered locus">KLTH0G13090g</name>
</gene>
<comment type="function">
    <text evidence="1">The AROM polypeptide catalyzes 5 consecutive enzymatic reactions in prechorismate polyaromatic amino acid biosynthesis.</text>
</comment>
<comment type="catalytic activity">
    <reaction evidence="1">
        <text>7-phospho-2-dehydro-3-deoxy-D-arabino-heptonate = 3-dehydroquinate + phosphate</text>
        <dbReference type="Rhea" id="RHEA:21968"/>
        <dbReference type="ChEBI" id="CHEBI:32364"/>
        <dbReference type="ChEBI" id="CHEBI:43474"/>
        <dbReference type="ChEBI" id="CHEBI:58394"/>
        <dbReference type="EC" id="4.2.3.4"/>
    </reaction>
</comment>
<comment type="catalytic activity">
    <reaction evidence="1">
        <text>3-dehydroquinate = 3-dehydroshikimate + H2O</text>
        <dbReference type="Rhea" id="RHEA:21096"/>
        <dbReference type="ChEBI" id="CHEBI:15377"/>
        <dbReference type="ChEBI" id="CHEBI:16630"/>
        <dbReference type="ChEBI" id="CHEBI:32364"/>
        <dbReference type="EC" id="4.2.1.10"/>
    </reaction>
</comment>
<comment type="catalytic activity">
    <reaction evidence="1">
        <text>shikimate + NADP(+) = 3-dehydroshikimate + NADPH + H(+)</text>
        <dbReference type="Rhea" id="RHEA:17737"/>
        <dbReference type="ChEBI" id="CHEBI:15378"/>
        <dbReference type="ChEBI" id="CHEBI:16630"/>
        <dbReference type="ChEBI" id="CHEBI:36208"/>
        <dbReference type="ChEBI" id="CHEBI:57783"/>
        <dbReference type="ChEBI" id="CHEBI:58349"/>
        <dbReference type="EC" id="1.1.1.25"/>
    </reaction>
</comment>
<comment type="catalytic activity">
    <reaction evidence="1">
        <text>shikimate + ATP = 3-phosphoshikimate + ADP + H(+)</text>
        <dbReference type="Rhea" id="RHEA:13121"/>
        <dbReference type="ChEBI" id="CHEBI:15378"/>
        <dbReference type="ChEBI" id="CHEBI:30616"/>
        <dbReference type="ChEBI" id="CHEBI:36208"/>
        <dbReference type="ChEBI" id="CHEBI:145989"/>
        <dbReference type="ChEBI" id="CHEBI:456216"/>
        <dbReference type="EC" id="2.7.1.71"/>
    </reaction>
</comment>
<comment type="catalytic activity">
    <reaction evidence="1">
        <text>3-phosphoshikimate + phosphoenolpyruvate = 5-O-(1-carboxyvinyl)-3-phosphoshikimate + phosphate</text>
        <dbReference type="Rhea" id="RHEA:21256"/>
        <dbReference type="ChEBI" id="CHEBI:43474"/>
        <dbReference type="ChEBI" id="CHEBI:57701"/>
        <dbReference type="ChEBI" id="CHEBI:58702"/>
        <dbReference type="ChEBI" id="CHEBI:145989"/>
        <dbReference type="EC" id="2.5.1.19"/>
    </reaction>
</comment>
<comment type="cofactor">
    <cofactor>
        <name>Zn(2+)</name>
        <dbReference type="ChEBI" id="CHEBI:29105"/>
    </cofactor>
    <text>Binds 2 Zn(2+) ions per subunit.</text>
</comment>
<comment type="pathway">
    <text evidence="1">Metabolic intermediate biosynthesis; chorismate biosynthesis; chorismate from D-erythrose 4-phosphate and phosphoenolpyruvate: step 2/7.</text>
</comment>
<comment type="pathway">
    <text evidence="1">Metabolic intermediate biosynthesis; chorismate biosynthesis; chorismate from D-erythrose 4-phosphate and phosphoenolpyruvate: step 3/7.</text>
</comment>
<comment type="pathway">
    <text evidence="1">Metabolic intermediate biosynthesis; chorismate biosynthesis; chorismate from D-erythrose 4-phosphate and phosphoenolpyruvate: step 4/7.</text>
</comment>
<comment type="pathway">
    <text evidence="1">Metabolic intermediate biosynthesis; chorismate biosynthesis; chorismate from D-erythrose 4-phosphate and phosphoenolpyruvate: step 5/7.</text>
</comment>
<comment type="pathway">
    <text evidence="1">Metabolic intermediate biosynthesis; chorismate biosynthesis; chorismate from D-erythrose 4-phosphate and phosphoenolpyruvate: step 6/7.</text>
</comment>
<comment type="subunit">
    <text evidence="1">Homodimer.</text>
</comment>
<comment type="subcellular location">
    <subcellularLocation>
        <location evidence="1">Cytoplasm</location>
    </subcellularLocation>
</comment>
<comment type="similarity">
    <text evidence="1">In the N-terminal section; belongs to the sugar phosphate cyclases superfamily. Dehydroquinate synthase family.</text>
</comment>
<comment type="similarity">
    <text evidence="1">In the 2nd section; belongs to the EPSP synthase family.</text>
</comment>
<comment type="similarity">
    <text evidence="1">In the 3rd section; belongs to the shikimate kinase family.</text>
</comment>
<comment type="similarity">
    <text evidence="1">In the 4th section; belongs to the type-I 3-dehydroquinase family.</text>
</comment>
<comment type="similarity">
    <text evidence="1">In the C-terminal section; belongs to the shikimate dehydrogenase family.</text>
</comment>
<evidence type="ECO:0000255" key="1">
    <source>
        <dbReference type="HAMAP-Rule" id="MF_03143"/>
    </source>
</evidence>
<name>ARO1_LACTC</name>
<sequence length="1579" mass="172764">MKVELSKVPILGKDVVHVGFDIADHIVDTIFQSCPSSTYVVINDTNVEKIPHYVDLCGELQAKLKSGSRILQYSVKPGEAHKTREQKAAIEDYLLSEGCTRDTVIIAVGGGVIGDMIGYVASTFMRGVRVVQVPTSLLAMVDSSIGGKTAVDTPLGKNFIGAFWQPQFVFVDIKWLETLPKREFINGIAEVIKTACIWNAEEFARLEENADLFLQVVNGSKTTQVSVQGQVHELSLTNIDAMLEHVYRLVLESIKVKTHVVSSDEREAGLRNLLNFGHTIGHAYEAILTPQALHGECVSIGMIKEAELSRYLNILSPTQVARLTKILAAYGLPISPDQKWFKDLTLNKKTPLDVLLKKMSIDKKNDGSKKKAVLLETIGKCYGTSAHVVSDEDIRFVLTDETLVYPFKTLENGQEKTIVPPGSKSISNRALILAALGEGTCKIKNLLHSDDTKHMLHAVQQLKGATITWEDNGETVVLKGHGGSTLQATAEPLYLGNAGTASRFLTSVAALVNSTSSQKSVVLTGNARMQERPIGPLVDSLRENGISIDYLNKEKSLPLKINTDSNFKGGRIELAATVSSQYVSSILMCAPYAEEPVTLALVGGKPISKLYIDMTIKMMEKFGIYVKASTEEPNTYHIPKGHYVNPPEYVIESDASSATYPLAYAAMTGTTVTVPNIGFESLQGDARFARDVLKPMGCSVTQTETSTTVTGPPVGGLKPLKHVDMEPMTDAFLTACVVAAVAHDGKEGSRNTTTIEGIANQRVKECNRILAMVDELAKFGVEANELPDGIQVHGLSSIDKLKVPEAIHSYDDHRVAMSFSLLAGMVGATKDALSEPVRILERSCTGKTWPGWWDVLHTQLGAKLDGSEPLQSAVKKNSNSSIVIIGMRAAGKTTVSSWCANALGFKFLDLDTVFEEQYKKGSVKEFVAEHGWDAFRATETKIFEESVKKYGEGYVLSTGGGIVEGAASRKSLKQFASQGGIVLHLHRDIDETIKFLNSDPTRPAYNEDIRNVWERREEWYKECANFTFYAPHCTSSTQFNQLRKTFETFIRTISGKREVKIPTNRSSFVCLTFDDLAAHKEKIPDITAGCSAVELRVDQLKSYDLDFVAKQLSILRLASSSLPIIFTIRTKSQGGQFPDDDKSTLGSLLSLALEVGVEFVDMELTLSSELQYSLVNNKRNTKIIGSHHDFDAKFDWNDSEWENRYNQALSLDVDVVKFVGTAKDFEDNLKLEQFRLQHTAKPLIAINMTDVGKMSRVLNTVLTPVTSSLLPSASAPGQLTLSQINEIYTLLGGFSAKNFYVVGSPISHSRSPVLHNTGYKILGLPHKFEKFETSSASEVKDKLLSKCKLGGLAVTIPLKLDIMEFMDELSESAKLIGAVNTVIPLGDGKFKGDNTDWLGIYNSFLANGVPENVRGNSGFVIGAGGTSRAAVYALHQLGCSDIHLVNRTVEKPHDLKKSFPSEYNLHVLEDSQQAEGISGSVALAVSCVPADKPLDDNLLARVRAVLAKAQGTSFKPTLLEAAYKPAVTPMMKTASDEFSWHIIPGSQMLVHQGVAQFQLWTGFRAPFNAIYSAVTEEQA</sequence>
<organism>
    <name type="scientific">Lachancea thermotolerans (strain ATCC 56472 / CBS 6340 / NRRL Y-8284)</name>
    <name type="common">Yeast</name>
    <name type="synonym">Kluyveromyces thermotolerans</name>
    <dbReference type="NCBI Taxonomy" id="559295"/>
    <lineage>
        <taxon>Eukaryota</taxon>
        <taxon>Fungi</taxon>
        <taxon>Dikarya</taxon>
        <taxon>Ascomycota</taxon>
        <taxon>Saccharomycotina</taxon>
        <taxon>Saccharomycetes</taxon>
        <taxon>Saccharomycetales</taxon>
        <taxon>Saccharomycetaceae</taxon>
        <taxon>Lachancea</taxon>
    </lineage>
</organism>
<keyword id="KW-0028">Amino-acid biosynthesis</keyword>
<keyword id="KW-0057">Aromatic amino acid biosynthesis</keyword>
<keyword id="KW-0067">ATP-binding</keyword>
<keyword id="KW-0963">Cytoplasm</keyword>
<keyword id="KW-0418">Kinase</keyword>
<keyword id="KW-0456">Lyase</keyword>
<keyword id="KW-0479">Metal-binding</keyword>
<keyword id="KW-0511">Multifunctional enzyme</keyword>
<keyword id="KW-0521">NADP</keyword>
<keyword id="KW-0547">Nucleotide-binding</keyword>
<keyword id="KW-0560">Oxidoreductase</keyword>
<keyword id="KW-1185">Reference proteome</keyword>
<keyword id="KW-0808">Transferase</keyword>
<keyword id="KW-0862">Zinc</keyword>
<reference key="1">
    <citation type="journal article" date="2009" name="Genome Res.">
        <title>Comparative genomics of protoploid Saccharomycetaceae.</title>
        <authorList>
            <consortium name="The Genolevures Consortium"/>
            <person name="Souciet J.-L."/>
            <person name="Dujon B."/>
            <person name="Gaillardin C."/>
            <person name="Johnston M."/>
            <person name="Baret P.V."/>
            <person name="Cliften P."/>
            <person name="Sherman D.J."/>
            <person name="Weissenbach J."/>
            <person name="Westhof E."/>
            <person name="Wincker P."/>
            <person name="Jubin C."/>
            <person name="Poulain J."/>
            <person name="Barbe V."/>
            <person name="Segurens B."/>
            <person name="Artiguenave F."/>
            <person name="Anthouard V."/>
            <person name="Vacherie B."/>
            <person name="Val M.-E."/>
            <person name="Fulton R.S."/>
            <person name="Minx P."/>
            <person name="Wilson R."/>
            <person name="Durrens P."/>
            <person name="Jean G."/>
            <person name="Marck C."/>
            <person name="Martin T."/>
            <person name="Nikolski M."/>
            <person name="Rolland T."/>
            <person name="Seret M.-L."/>
            <person name="Casaregola S."/>
            <person name="Despons L."/>
            <person name="Fairhead C."/>
            <person name="Fischer G."/>
            <person name="Lafontaine I."/>
            <person name="Leh V."/>
            <person name="Lemaire M."/>
            <person name="de Montigny J."/>
            <person name="Neuveglise C."/>
            <person name="Thierry A."/>
            <person name="Blanc-Lenfle I."/>
            <person name="Bleykasten C."/>
            <person name="Diffels J."/>
            <person name="Fritsch E."/>
            <person name="Frangeul L."/>
            <person name="Goeffon A."/>
            <person name="Jauniaux N."/>
            <person name="Kachouri-Lafond R."/>
            <person name="Payen C."/>
            <person name="Potier S."/>
            <person name="Pribylova L."/>
            <person name="Ozanne C."/>
            <person name="Richard G.-F."/>
            <person name="Sacerdot C."/>
            <person name="Straub M.-L."/>
            <person name="Talla E."/>
        </authorList>
    </citation>
    <scope>NUCLEOTIDE SEQUENCE [LARGE SCALE GENOMIC DNA]</scope>
    <source>
        <strain>ATCC 56472 / CBS 6340 / NRRL Y-8284</strain>
    </source>
</reference>
<feature type="chain" id="PRO_0000406719" description="Pentafunctional AROM polypeptide">
    <location>
        <begin position="1"/>
        <end position="1579"/>
    </location>
</feature>
<feature type="region of interest" description="3-dehydroquinate synthase">
    <location>
        <begin position="1"/>
        <end position="391"/>
    </location>
</feature>
<feature type="region of interest" description="EPSP synthase">
    <location>
        <begin position="404"/>
        <end position="862"/>
    </location>
</feature>
<feature type="region of interest" description="Shikimate kinase">
    <location>
        <begin position="881"/>
        <end position="1070"/>
    </location>
</feature>
<feature type="region of interest" description="3-dehydroquinase">
    <location>
        <begin position="1071"/>
        <end position="1283"/>
    </location>
</feature>
<feature type="region of interest" description="Shikimate dehydrogenase">
    <location>
        <begin position="1296"/>
        <end position="1579"/>
    </location>
</feature>
<feature type="active site" description="Proton acceptor; for 3-dehydroquinate synthase activity" evidence="1">
    <location>
        <position position="267"/>
    </location>
</feature>
<feature type="active site" description="Proton acceptor; for 3-dehydroquinate synthase activity" evidence="1">
    <location>
        <position position="282"/>
    </location>
</feature>
<feature type="active site" description="For EPSP synthase activity" evidence="1">
    <location>
        <position position="844"/>
    </location>
</feature>
<feature type="active site" description="Proton acceptor; for 3-dehydroquinate dehydratase activity" evidence="1">
    <location>
        <position position="1188"/>
    </location>
</feature>
<feature type="active site" description="Schiff-base intermediate with substrate; for 3-dehydroquinate dehydratase activity" evidence="1">
    <location>
        <position position="1217"/>
    </location>
</feature>
<feature type="binding site" evidence="1">
    <location>
        <begin position="44"/>
        <end position="46"/>
    </location>
    <ligand>
        <name>NAD(+)</name>
        <dbReference type="ChEBI" id="CHEBI:57540"/>
    </ligand>
</feature>
<feature type="binding site" evidence="1">
    <location>
        <begin position="79"/>
        <end position="82"/>
    </location>
    <ligand>
        <name>NAD(+)</name>
        <dbReference type="ChEBI" id="CHEBI:57540"/>
    </ligand>
</feature>
<feature type="binding site" evidence="1">
    <location>
        <begin position="110"/>
        <end position="112"/>
    </location>
    <ligand>
        <name>NAD(+)</name>
        <dbReference type="ChEBI" id="CHEBI:57540"/>
    </ligand>
</feature>
<feature type="binding site" evidence="1">
    <location>
        <position position="115"/>
    </location>
    <ligand>
        <name>NAD(+)</name>
        <dbReference type="ChEBI" id="CHEBI:57540"/>
    </ligand>
</feature>
<feature type="binding site" evidence="1">
    <location>
        <position position="126"/>
    </location>
    <ligand>
        <name>7-phospho-2-dehydro-3-deoxy-D-arabino-heptonate</name>
        <dbReference type="ChEBI" id="CHEBI:58394"/>
    </ligand>
</feature>
<feature type="binding site" evidence="1">
    <location>
        <begin position="135"/>
        <end position="136"/>
    </location>
    <ligand>
        <name>NAD(+)</name>
        <dbReference type="ChEBI" id="CHEBI:57540"/>
    </ligand>
</feature>
<feature type="binding site" evidence="1">
    <location>
        <position position="142"/>
    </location>
    <ligand>
        <name>7-phospho-2-dehydro-3-deoxy-D-arabino-heptonate</name>
        <dbReference type="ChEBI" id="CHEBI:58394"/>
    </ligand>
</feature>
<feature type="binding site" evidence="1">
    <location>
        <position position="148"/>
    </location>
    <ligand>
        <name>7-phospho-2-dehydro-3-deoxy-D-arabino-heptonate</name>
        <dbReference type="ChEBI" id="CHEBI:58394"/>
    </ligand>
</feature>
<feature type="binding site" evidence="1">
    <location>
        <position position="157"/>
    </location>
    <ligand>
        <name>NAD(+)</name>
        <dbReference type="ChEBI" id="CHEBI:57540"/>
    </ligand>
</feature>
<feature type="binding site" evidence="1">
    <location>
        <position position="158"/>
    </location>
    <ligand>
        <name>7-phospho-2-dehydro-3-deoxy-D-arabino-heptonate</name>
        <dbReference type="ChEBI" id="CHEBI:58394"/>
    </ligand>
</feature>
<feature type="binding site" evidence="1">
    <location>
        <begin position="175"/>
        <end position="178"/>
    </location>
    <ligand>
        <name>NAD(+)</name>
        <dbReference type="ChEBI" id="CHEBI:57540"/>
    </ligand>
</feature>
<feature type="binding site" evidence="1">
    <location>
        <position position="186"/>
    </location>
    <ligand>
        <name>NAD(+)</name>
        <dbReference type="ChEBI" id="CHEBI:57540"/>
    </ligand>
</feature>
<feature type="binding site" evidence="1">
    <location>
        <begin position="190"/>
        <end position="193"/>
    </location>
    <ligand>
        <name>7-phospho-2-dehydro-3-deoxy-D-arabino-heptonate</name>
        <dbReference type="ChEBI" id="CHEBI:58394"/>
    </ligand>
</feature>
<feature type="binding site" evidence="1">
    <location>
        <position position="190"/>
    </location>
    <ligand>
        <name>Zn(2+)</name>
        <dbReference type="ChEBI" id="CHEBI:29105"/>
        <note>catalytic</note>
    </ligand>
</feature>
<feature type="binding site" evidence="1">
    <location>
        <position position="257"/>
    </location>
    <ligand>
        <name>7-phospho-2-dehydro-3-deoxy-D-arabino-heptonate</name>
        <dbReference type="ChEBI" id="CHEBI:58394"/>
    </ligand>
</feature>
<feature type="binding site" evidence="1">
    <location>
        <begin position="271"/>
        <end position="275"/>
    </location>
    <ligand>
        <name>7-phospho-2-dehydro-3-deoxy-D-arabino-heptonate</name>
        <dbReference type="ChEBI" id="CHEBI:58394"/>
    </ligand>
</feature>
<feature type="binding site" evidence="1">
    <location>
        <position position="278"/>
    </location>
    <ligand>
        <name>7-phospho-2-dehydro-3-deoxy-D-arabino-heptonate</name>
        <dbReference type="ChEBI" id="CHEBI:58394"/>
    </ligand>
</feature>
<feature type="binding site" evidence="1">
    <location>
        <position position="278"/>
    </location>
    <ligand>
        <name>Zn(2+)</name>
        <dbReference type="ChEBI" id="CHEBI:29105"/>
        <note>catalytic</note>
    </ligand>
</feature>
<feature type="binding site" evidence="1">
    <location>
        <position position="294"/>
    </location>
    <ligand>
        <name>7-phospho-2-dehydro-3-deoxy-D-arabino-heptonate</name>
        <dbReference type="ChEBI" id="CHEBI:58394"/>
    </ligand>
</feature>
<feature type="binding site" evidence="1">
    <location>
        <position position="294"/>
    </location>
    <ligand>
        <name>Zn(2+)</name>
        <dbReference type="ChEBI" id="CHEBI:29105"/>
        <note>catalytic</note>
    </ligand>
</feature>
<feature type="binding site" evidence="1">
    <location>
        <position position="363"/>
    </location>
    <ligand>
        <name>7-phospho-2-dehydro-3-deoxy-D-arabino-heptonate</name>
        <dbReference type="ChEBI" id="CHEBI:58394"/>
    </ligand>
</feature>
<feature type="binding site" evidence="1">
    <location>
        <begin position="886"/>
        <end position="893"/>
    </location>
    <ligand>
        <name>ATP</name>
        <dbReference type="ChEBI" id="CHEBI:30616"/>
    </ligand>
</feature>
<dbReference type="EC" id="4.2.3.4" evidence="1"/>
<dbReference type="EC" id="2.5.1.19" evidence="1"/>
<dbReference type="EC" id="2.7.1.71" evidence="1"/>
<dbReference type="EC" id="4.2.1.10" evidence="1"/>
<dbReference type="EC" id="1.1.1.25" evidence="1"/>
<dbReference type="EMBL" id="CU928171">
    <property type="protein sequence ID" value="CAR25163.1"/>
    <property type="molecule type" value="Genomic_DNA"/>
</dbReference>
<dbReference type="RefSeq" id="XP_002555600.1">
    <property type="nucleotide sequence ID" value="XM_002555554.1"/>
</dbReference>
<dbReference type="SMR" id="C5DN02"/>
<dbReference type="FunCoup" id="C5DN02">
    <property type="interactions" value="530"/>
</dbReference>
<dbReference type="STRING" id="559295.C5DN02"/>
<dbReference type="GeneID" id="8293883"/>
<dbReference type="KEGG" id="lth:KLTH0G13090g"/>
<dbReference type="eggNOG" id="KOG0692">
    <property type="taxonomic scope" value="Eukaryota"/>
</dbReference>
<dbReference type="HOGENOM" id="CLU_001201_1_2_1"/>
<dbReference type="InParanoid" id="C5DN02"/>
<dbReference type="OMA" id="SWANMSW"/>
<dbReference type="OrthoDB" id="197068at2759"/>
<dbReference type="UniPathway" id="UPA00053">
    <property type="reaction ID" value="UER00085"/>
</dbReference>
<dbReference type="UniPathway" id="UPA00053">
    <property type="reaction ID" value="UER00086"/>
</dbReference>
<dbReference type="UniPathway" id="UPA00053">
    <property type="reaction ID" value="UER00087"/>
</dbReference>
<dbReference type="UniPathway" id="UPA00053">
    <property type="reaction ID" value="UER00088"/>
</dbReference>
<dbReference type="UniPathway" id="UPA00053">
    <property type="reaction ID" value="UER00089"/>
</dbReference>
<dbReference type="Proteomes" id="UP000002036">
    <property type="component" value="Chromosome G"/>
</dbReference>
<dbReference type="GO" id="GO:0005737">
    <property type="term" value="C:cytoplasm"/>
    <property type="evidence" value="ECO:0007669"/>
    <property type="project" value="UniProtKB-SubCell"/>
</dbReference>
<dbReference type="GO" id="GO:0003855">
    <property type="term" value="F:3-dehydroquinate dehydratase activity"/>
    <property type="evidence" value="ECO:0007669"/>
    <property type="project" value="UniProtKB-UniRule"/>
</dbReference>
<dbReference type="GO" id="GO:0003856">
    <property type="term" value="F:3-dehydroquinate synthase activity"/>
    <property type="evidence" value="ECO:0007669"/>
    <property type="project" value="UniProtKB-UniRule"/>
</dbReference>
<dbReference type="GO" id="GO:0003866">
    <property type="term" value="F:3-phosphoshikimate 1-carboxyvinyltransferase activity"/>
    <property type="evidence" value="ECO:0007669"/>
    <property type="project" value="UniProtKB-UniRule"/>
</dbReference>
<dbReference type="GO" id="GO:0005524">
    <property type="term" value="F:ATP binding"/>
    <property type="evidence" value="ECO:0007669"/>
    <property type="project" value="UniProtKB-UniRule"/>
</dbReference>
<dbReference type="GO" id="GO:0046872">
    <property type="term" value="F:metal ion binding"/>
    <property type="evidence" value="ECO:0007669"/>
    <property type="project" value="UniProtKB-UniRule"/>
</dbReference>
<dbReference type="GO" id="GO:0004764">
    <property type="term" value="F:shikimate 3-dehydrogenase (NADP+) activity"/>
    <property type="evidence" value="ECO:0007669"/>
    <property type="project" value="UniProtKB-UniRule"/>
</dbReference>
<dbReference type="GO" id="GO:0004765">
    <property type="term" value="F:shikimate kinase activity"/>
    <property type="evidence" value="ECO:0007669"/>
    <property type="project" value="UniProtKB-UniRule"/>
</dbReference>
<dbReference type="GO" id="GO:0008652">
    <property type="term" value="P:amino acid biosynthetic process"/>
    <property type="evidence" value="ECO:0007669"/>
    <property type="project" value="UniProtKB-KW"/>
</dbReference>
<dbReference type="GO" id="GO:0009073">
    <property type="term" value="P:aromatic amino acid family biosynthetic process"/>
    <property type="evidence" value="ECO:0007669"/>
    <property type="project" value="UniProtKB-UniRule"/>
</dbReference>
<dbReference type="GO" id="GO:0009423">
    <property type="term" value="P:chorismate biosynthetic process"/>
    <property type="evidence" value="ECO:0007669"/>
    <property type="project" value="UniProtKB-UniRule"/>
</dbReference>
<dbReference type="CDD" id="cd00502">
    <property type="entry name" value="DHQase_I"/>
    <property type="match status" value="1"/>
</dbReference>
<dbReference type="CDD" id="cd08195">
    <property type="entry name" value="DHQS"/>
    <property type="match status" value="1"/>
</dbReference>
<dbReference type="CDD" id="cd01556">
    <property type="entry name" value="EPSP_synthase"/>
    <property type="match status" value="1"/>
</dbReference>
<dbReference type="CDD" id="cd01065">
    <property type="entry name" value="NAD_bind_Shikimate_DH"/>
    <property type="match status" value="1"/>
</dbReference>
<dbReference type="CDD" id="cd00464">
    <property type="entry name" value="SK"/>
    <property type="match status" value="1"/>
</dbReference>
<dbReference type="FunFam" id="1.20.1090.10:FF:000007">
    <property type="entry name" value="Pentafunctional AROM polypeptide"/>
    <property type="match status" value="1"/>
</dbReference>
<dbReference type="FunFam" id="3.20.20.70:FF:000135">
    <property type="entry name" value="Pentafunctional AROM polypeptide"/>
    <property type="match status" value="1"/>
</dbReference>
<dbReference type="FunFam" id="3.40.50.1970:FF:000007">
    <property type="entry name" value="Pentafunctional AROM polypeptide"/>
    <property type="match status" value="1"/>
</dbReference>
<dbReference type="FunFam" id="3.40.50.300:FF:001256">
    <property type="entry name" value="Pentafunctional AROM polypeptide"/>
    <property type="match status" value="1"/>
</dbReference>
<dbReference type="FunFam" id="3.65.10.10:FF:000007">
    <property type="entry name" value="Pentafunctional AROM polypeptide"/>
    <property type="match status" value="1"/>
</dbReference>
<dbReference type="FunFam" id="3.65.10.10:FF:000008">
    <property type="entry name" value="Pentafunctional AROM polypeptide"/>
    <property type="match status" value="1"/>
</dbReference>
<dbReference type="Gene3D" id="3.40.50.1970">
    <property type="match status" value="1"/>
</dbReference>
<dbReference type="Gene3D" id="3.20.20.70">
    <property type="entry name" value="Aldolase class I"/>
    <property type="match status" value="1"/>
</dbReference>
<dbReference type="Gene3D" id="1.20.1090.10">
    <property type="entry name" value="Dehydroquinate synthase-like - alpha domain"/>
    <property type="match status" value="1"/>
</dbReference>
<dbReference type="Gene3D" id="3.65.10.10">
    <property type="entry name" value="Enolpyruvate transferase domain"/>
    <property type="match status" value="2"/>
</dbReference>
<dbReference type="Gene3D" id="3.40.50.10860">
    <property type="entry name" value="Leucine Dehydrogenase, chain A, domain 1"/>
    <property type="match status" value="1"/>
</dbReference>
<dbReference type="Gene3D" id="3.40.50.720">
    <property type="entry name" value="NAD(P)-binding Rossmann-like Domain"/>
    <property type="match status" value="1"/>
</dbReference>
<dbReference type="Gene3D" id="3.40.50.300">
    <property type="entry name" value="P-loop containing nucleotide triphosphate hydrolases"/>
    <property type="match status" value="1"/>
</dbReference>
<dbReference type="HAMAP" id="MF_00210">
    <property type="entry name" value="EPSP_synth"/>
    <property type="match status" value="1"/>
</dbReference>
<dbReference type="HAMAP" id="MF_03143">
    <property type="entry name" value="Pentafunct_AroM"/>
    <property type="match status" value="1"/>
</dbReference>
<dbReference type="HAMAP" id="MF_00109">
    <property type="entry name" value="Shikimate_kinase"/>
    <property type="match status" value="1"/>
</dbReference>
<dbReference type="InterPro" id="IPR018508">
    <property type="entry name" value="3-dehydroquinate_DH_AS"/>
</dbReference>
<dbReference type="InterPro" id="IPR013785">
    <property type="entry name" value="Aldolase_TIM"/>
</dbReference>
<dbReference type="InterPro" id="IPR046346">
    <property type="entry name" value="Aminoacid_DH-like_N_sf"/>
</dbReference>
<dbReference type="InterPro" id="IPR016037">
    <property type="entry name" value="DHQ_synth_AroB"/>
</dbReference>
<dbReference type="InterPro" id="IPR030960">
    <property type="entry name" value="DHQS/DOIS_N"/>
</dbReference>
<dbReference type="InterPro" id="IPR056179">
    <property type="entry name" value="DHQS_C"/>
</dbReference>
<dbReference type="InterPro" id="IPR001381">
    <property type="entry name" value="DHquinase_I"/>
</dbReference>
<dbReference type="InterPro" id="IPR001986">
    <property type="entry name" value="Enolpyruvate_Tfrase_dom"/>
</dbReference>
<dbReference type="InterPro" id="IPR036968">
    <property type="entry name" value="Enolpyruvate_Tfrase_sf"/>
</dbReference>
<dbReference type="InterPro" id="IPR006264">
    <property type="entry name" value="EPSP_synthase"/>
</dbReference>
<dbReference type="InterPro" id="IPR023193">
    <property type="entry name" value="EPSP_synthase_CS"/>
</dbReference>
<dbReference type="InterPro" id="IPR036291">
    <property type="entry name" value="NAD(P)-bd_dom_sf"/>
</dbReference>
<dbReference type="InterPro" id="IPR027417">
    <property type="entry name" value="P-loop_NTPase"/>
</dbReference>
<dbReference type="InterPro" id="IPR008289">
    <property type="entry name" value="Pentafunct_AroM"/>
</dbReference>
<dbReference type="InterPro" id="IPR013792">
    <property type="entry name" value="RNA3'P_cycl/enolpyr_Trfase_a/b"/>
</dbReference>
<dbReference type="InterPro" id="IPR041121">
    <property type="entry name" value="SDH_C"/>
</dbReference>
<dbReference type="InterPro" id="IPR031322">
    <property type="entry name" value="Shikimate/glucono_kinase"/>
</dbReference>
<dbReference type="InterPro" id="IPR013708">
    <property type="entry name" value="Shikimate_DH-bd_N"/>
</dbReference>
<dbReference type="InterPro" id="IPR010110">
    <property type="entry name" value="Shikimate_DH_AroM-type"/>
</dbReference>
<dbReference type="InterPro" id="IPR000623">
    <property type="entry name" value="Shikimate_kinase/TSH1"/>
</dbReference>
<dbReference type="InterPro" id="IPR023000">
    <property type="entry name" value="Shikimate_kinase_CS"/>
</dbReference>
<dbReference type="InterPro" id="IPR006151">
    <property type="entry name" value="Shikm_DH/Glu-tRNA_Rdtase"/>
</dbReference>
<dbReference type="NCBIfam" id="TIGR01356">
    <property type="entry name" value="aroA"/>
    <property type="match status" value="1"/>
</dbReference>
<dbReference type="NCBIfam" id="TIGR01357">
    <property type="entry name" value="aroB"/>
    <property type="match status" value="1"/>
</dbReference>
<dbReference type="NCBIfam" id="TIGR01093">
    <property type="entry name" value="aroD"/>
    <property type="match status" value="1"/>
</dbReference>
<dbReference type="NCBIfam" id="TIGR01809">
    <property type="entry name" value="Shik-DH-AROM"/>
    <property type="match status" value="1"/>
</dbReference>
<dbReference type="PANTHER" id="PTHR21090">
    <property type="entry name" value="AROM/DEHYDROQUINATE SYNTHASE"/>
    <property type="match status" value="1"/>
</dbReference>
<dbReference type="PANTHER" id="PTHR21090:SF5">
    <property type="entry name" value="PENTAFUNCTIONAL AROM POLYPEPTIDE"/>
    <property type="match status" value="1"/>
</dbReference>
<dbReference type="Pfam" id="PF01761">
    <property type="entry name" value="DHQ_synthase"/>
    <property type="match status" value="1"/>
</dbReference>
<dbReference type="Pfam" id="PF24621">
    <property type="entry name" value="DHQS_C"/>
    <property type="match status" value="1"/>
</dbReference>
<dbReference type="Pfam" id="PF01487">
    <property type="entry name" value="DHquinase_I"/>
    <property type="match status" value="1"/>
</dbReference>
<dbReference type="Pfam" id="PF00275">
    <property type="entry name" value="EPSP_synthase"/>
    <property type="match status" value="1"/>
</dbReference>
<dbReference type="Pfam" id="PF18317">
    <property type="entry name" value="SDH_C"/>
    <property type="match status" value="1"/>
</dbReference>
<dbReference type="Pfam" id="PF01488">
    <property type="entry name" value="Shikimate_DH"/>
    <property type="match status" value="1"/>
</dbReference>
<dbReference type="Pfam" id="PF08501">
    <property type="entry name" value="Shikimate_dh_N"/>
    <property type="match status" value="1"/>
</dbReference>
<dbReference type="Pfam" id="PF01202">
    <property type="entry name" value="SKI"/>
    <property type="match status" value="1"/>
</dbReference>
<dbReference type="PIRSF" id="PIRSF000514">
    <property type="entry name" value="Pentafunct_AroM"/>
    <property type="match status" value="1"/>
</dbReference>
<dbReference type="PRINTS" id="PR01100">
    <property type="entry name" value="SHIKIMTKNASE"/>
</dbReference>
<dbReference type="SUPFAM" id="SSF51569">
    <property type="entry name" value="Aldolase"/>
    <property type="match status" value="1"/>
</dbReference>
<dbReference type="SUPFAM" id="SSF53223">
    <property type="entry name" value="Aminoacid dehydrogenase-like, N-terminal domain"/>
    <property type="match status" value="1"/>
</dbReference>
<dbReference type="SUPFAM" id="SSF56796">
    <property type="entry name" value="Dehydroquinate synthase-like"/>
    <property type="match status" value="1"/>
</dbReference>
<dbReference type="SUPFAM" id="SSF55205">
    <property type="entry name" value="EPT/RTPC-like"/>
    <property type="match status" value="1"/>
</dbReference>
<dbReference type="SUPFAM" id="SSF51735">
    <property type="entry name" value="NAD(P)-binding Rossmann-fold domains"/>
    <property type="match status" value="1"/>
</dbReference>
<dbReference type="SUPFAM" id="SSF52540">
    <property type="entry name" value="P-loop containing nucleoside triphosphate hydrolases"/>
    <property type="match status" value="1"/>
</dbReference>
<dbReference type="PROSITE" id="PS01028">
    <property type="entry name" value="DEHYDROQUINASE_I"/>
    <property type="match status" value="1"/>
</dbReference>
<dbReference type="PROSITE" id="PS00104">
    <property type="entry name" value="EPSP_SYNTHASE_1"/>
    <property type="match status" value="1"/>
</dbReference>
<dbReference type="PROSITE" id="PS00885">
    <property type="entry name" value="EPSP_SYNTHASE_2"/>
    <property type="match status" value="1"/>
</dbReference>
<dbReference type="PROSITE" id="PS01128">
    <property type="entry name" value="SHIKIMATE_KINASE"/>
    <property type="match status" value="1"/>
</dbReference>
<proteinExistence type="inferred from homology"/>
<accession>C5DN02</accession>